<sequence length="411" mass="44728">MQSWSSAPVPIVPGRGPELRLYDTADRQVRPVAPGNTATMYVCGITPYDATHLGHAATYLAFDLIHRLWLDLGHEVRYVQNVTDVDDPLFERADRDGVDWRDLAAQEVALFREDMAALRVLSPHDYVGATEAVAEIIELVEKLLASGAAYVLDGEHPDVYYRSDATLQFGYESGYDRDTMLGLFEQRGGDPGRPGKNDALDALLWRAARPGEPSWPSPFGPGRPGWHIECAAIALSRVGSGLDVQGGGSDLIFPHHEFTAAHAECVTGERRFARHYVHAGMIGWDGHKMSKSRGNLVLVSGLRAEGVNPAAVRLGLLAGHYRADRFWSQQVLDEAVGRLQRWRAATTLPAGPDAAAVVARVRQYLADDLNTPKAIAALDGWATDALDYGGHDEVAPRLVASTIDALLGVDL</sequence>
<accession>B2HFY1</accession>
<feature type="chain" id="PRO_0000400462" description="L-cysteine:1D-myo-inositol 2-amino-2-deoxy-alpha-D-glucopyranoside ligase">
    <location>
        <begin position="1"/>
        <end position="411"/>
    </location>
</feature>
<feature type="short sequence motif" description="'HIGH' region" evidence="1">
    <location>
        <begin position="45"/>
        <end position="55"/>
    </location>
</feature>
<feature type="short sequence motif" description="'ERGGDP' region" evidence="1">
    <location>
        <begin position="186"/>
        <end position="191"/>
    </location>
</feature>
<feature type="short sequence motif" description="'KMSKS' region" evidence="1">
    <location>
        <begin position="288"/>
        <end position="292"/>
    </location>
</feature>
<feature type="binding site" evidence="1">
    <location>
        <begin position="43"/>
        <end position="46"/>
    </location>
    <ligand>
        <name>L-cysteinyl-5'-AMP</name>
        <dbReference type="ChEBI" id="CHEBI:144924"/>
    </ligand>
</feature>
<feature type="binding site" evidence="1">
    <location>
        <position position="43"/>
    </location>
    <ligand>
        <name>Zn(2+)</name>
        <dbReference type="ChEBI" id="CHEBI:29105"/>
    </ligand>
</feature>
<feature type="binding site" evidence="1">
    <location>
        <position position="58"/>
    </location>
    <ligand>
        <name>L-cysteinyl-5'-AMP</name>
        <dbReference type="ChEBI" id="CHEBI:144924"/>
    </ligand>
</feature>
<feature type="binding site" evidence="1">
    <location>
        <begin position="81"/>
        <end position="83"/>
    </location>
    <ligand>
        <name>L-cysteinyl-5'-AMP</name>
        <dbReference type="ChEBI" id="CHEBI:144924"/>
    </ligand>
</feature>
<feature type="binding site" evidence="1">
    <location>
        <position position="226"/>
    </location>
    <ligand>
        <name>L-cysteinyl-5'-AMP</name>
        <dbReference type="ChEBI" id="CHEBI:144924"/>
    </ligand>
</feature>
<feature type="binding site" evidence="1">
    <location>
        <position position="230"/>
    </location>
    <ligand>
        <name>Zn(2+)</name>
        <dbReference type="ChEBI" id="CHEBI:29105"/>
    </ligand>
</feature>
<feature type="binding site" evidence="1">
    <location>
        <begin position="248"/>
        <end position="250"/>
    </location>
    <ligand>
        <name>L-cysteinyl-5'-AMP</name>
        <dbReference type="ChEBI" id="CHEBI:144924"/>
    </ligand>
</feature>
<feature type="binding site" evidence="1">
    <location>
        <position position="255"/>
    </location>
    <ligand>
        <name>Zn(2+)</name>
        <dbReference type="ChEBI" id="CHEBI:29105"/>
    </ligand>
</feature>
<feature type="binding site" evidence="1">
    <location>
        <position position="282"/>
    </location>
    <ligand>
        <name>L-cysteinyl-5'-AMP</name>
        <dbReference type="ChEBI" id="CHEBI:144924"/>
    </ligand>
</feature>
<reference key="1">
    <citation type="journal article" date="2008" name="Genome Res.">
        <title>Insights from the complete genome sequence of Mycobacterium marinum on the evolution of Mycobacterium tuberculosis.</title>
        <authorList>
            <person name="Stinear T.P."/>
            <person name="Seemann T."/>
            <person name="Harrison P.F."/>
            <person name="Jenkin G.A."/>
            <person name="Davies J.K."/>
            <person name="Johnson P.D."/>
            <person name="Abdellah Z."/>
            <person name="Arrowsmith C."/>
            <person name="Chillingworth T."/>
            <person name="Churcher C."/>
            <person name="Clarke K."/>
            <person name="Cronin A."/>
            <person name="Davis P."/>
            <person name="Goodhead I."/>
            <person name="Holroyd N."/>
            <person name="Jagels K."/>
            <person name="Lord A."/>
            <person name="Moule S."/>
            <person name="Mungall K."/>
            <person name="Norbertczak H."/>
            <person name="Quail M.A."/>
            <person name="Rabbinowitsch E."/>
            <person name="Walker D."/>
            <person name="White B."/>
            <person name="Whitehead S."/>
            <person name="Small P.L."/>
            <person name="Brosch R."/>
            <person name="Ramakrishnan L."/>
            <person name="Fischbach M.A."/>
            <person name="Parkhill J."/>
            <person name="Cole S.T."/>
        </authorList>
    </citation>
    <scope>NUCLEOTIDE SEQUENCE [LARGE SCALE GENOMIC DNA]</scope>
    <source>
        <strain>ATCC BAA-535 / M</strain>
    </source>
</reference>
<protein>
    <recommendedName>
        <fullName evidence="1">L-cysteine:1D-myo-inositol 2-amino-2-deoxy-alpha-D-glucopyranoside ligase</fullName>
        <shortName evidence="1">L-Cys:GlcN-Ins ligase</shortName>
        <ecNumber evidence="1">6.3.1.13</ecNumber>
    </recommendedName>
    <alternativeName>
        <fullName evidence="1">Mycothiol ligase</fullName>
        <shortName evidence="1">MSH ligase</shortName>
    </alternativeName>
</protein>
<dbReference type="EC" id="6.3.1.13" evidence="1"/>
<dbReference type="EMBL" id="CP000854">
    <property type="protein sequence ID" value="ACC41545.1"/>
    <property type="molecule type" value="Genomic_DNA"/>
</dbReference>
<dbReference type="RefSeq" id="WP_012394792.1">
    <property type="nucleotide sequence ID" value="NC_010612.1"/>
</dbReference>
<dbReference type="SMR" id="B2HFY1"/>
<dbReference type="STRING" id="216594.MMAR_3110"/>
<dbReference type="KEGG" id="mmi:MMAR_3110"/>
<dbReference type="eggNOG" id="COG0215">
    <property type="taxonomic scope" value="Bacteria"/>
</dbReference>
<dbReference type="HOGENOM" id="CLU_013528_0_0_11"/>
<dbReference type="OrthoDB" id="9815130at2"/>
<dbReference type="Proteomes" id="UP000001190">
    <property type="component" value="Chromosome"/>
</dbReference>
<dbReference type="GO" id="GO:0005829">
    <property type="term" value="C:cytosol"/>
    <property type="evidence" value="ECO:0007669"/>
    <property type="project" value="TreeGrafter"/>
</dbReference>
<dbReference type="GO" id="GO:0005524">
    <property type="term" value="F:ATP binding"/>
    <property type="evidence" value="ECO:0007669"/>
    <property type="project" value="UniProtKB-KW"/>
</dbReference>
<dbReference type="GO" id="GO:0035446">
    <property type="term" value="F:cysteine-glucosaminylinositol ligase activity"/>
    <property type="evidence" value="ECO:0007669"/>
    <property type="project" value="UniProtKB-UniRule"/>
</dbReference>
<dbReference type="GO" id="GO:0004817">
    <property type="term" value="F:cysteine-tRNA ligase activity"/>
    <property type="evidence" value="ECO:0007669"/>
    <property type="project" value="TreeGrafter"/>
</dbReference>
<dbReference type="GO" id="GO:0008270">
    <property type="term" value="F:zinc ion binding"/>
    <property type="evidence" value="ECO:0007669"/>
    <property type="project" value="UniProtKB-UniRule"/>
</dbReference>
<dbReference type="GO" id="GO:0006423">
    <property type="term" value="P:cysteinyl-tRNA aminoacylation"/>
    <property type="evidence" value="ECO:0007669"/>
    <property type="project" value="TreeGrafter"/>
</dbReference>
<dbReference type="GO" id="GO:0010125">
    <property type="term" value="P:mycothiol biosynthetic process"/>
    <property type="evidence" value="ECO:0007669"/>
    <property type="project" value="UniProtKB-UniRule"/>
</dbReference>
<dbReference type="CDD" id="cd07955">
    <property type="entry name" value="Anticodon_Ia_Cys_like"/>
    <property type="match status" value="1"/>
</dbReference>
<dbReference type="CDD" id="cd00672">
    <property type="entry name" value="CysRS_core"/>
    <property type="match status" value="1"/>
</dbReference>
<dbReference type="FunFam" id="3.40.50.620:FF:000134">
    <property type="entry name" value="L-cysteine:1D-myo-inositol 2-amino-2-deoxy-alpha-D-glucopyranoside ligase"/>
    <property type="match status" value="1"/>
</dbReference>
<dbReference type="Gene3D" id="1.20.120.640">
    <property type="entry name" value="Anticodon-binding domain of a subclass of class I aminoacyl-tRNA synthetases"/>
    <property type="match status" value="1"/>
</dbReference>
<dbReference type="Gene3D" id="3.40.50.620">
    <property type="entry name" value="HUPs"/>
    <property type="match status" value="1"/>
</dbReference>
<dbReference type="HAMAP" id="MF_01697">
    <property type="entry name" value="MshC"/>
    <property type="match status" value="1"/>
</dbReference>
<dbReference type="InterPro" id="IPR024909">
    <property type="entry name" value="Cys-tRNA/MSH_ligase"/>
</dbReference>
<dbReference type="InterPro" id="IPR017812">
    <property type="entry name" value="Mycothiol_ligase_MshC"/>
</dbReference>
<dbReference type="InterPro" id="IPR014729">
    <property type="entry name" value="Rossmann-like_a/b/a_fold"/>
</dbReference>
<dbReference type="InterPro" id="IPR032678">
    <property type="entry name" value="tRNA-synt_1_cat_dom"/>
</dbReference>
<dbReference type="InterPro" id="IPR009080">
    <property type="entry name" value="tRNAsynth_Ia_anticodon-bd"/>
</dbReference>
<dbReference type="NCBIfam" id="TIGR03447">
    <property type="entry name" value="mycothiol_MshC"/>
    <property type="match status" value="1"/>
</dbReference>
<dbReference type="PANTHER" id="PTHR10890:SF3">
    <property type="entry name" value="CYSTEINE--TRNA LIGASE, CYTOPLASMIC"/>
    <property type="match status" value="1"/>
</dbReference>
<dbReference type="PANTHER" id="PTHR10890">
    <property type="entry name" value="CYSTEINYL-TRNA SYNTHETASE"/>
    <property type="match status" value="1"/>
</dbReference>
<dbReference type="Pfam" id="PF01406">
    <property type="entry name" value="tRNA-synt_1e"/>
    <property type="match status" value="1"/>
</dbReference>
<dbReference type="PRINTS" id="PR00983">
    <property type="entry name" value="TRNASYNTHCYS"/>
</dbReference>
<dbReference type="SUPFAM" id="SSF47323">
    <property type="entry name" value="Anticodon-binding domain of a subclass of class I aminoacyl-tRNA synthetases"/>
    <property type="match status" value="1"/>
</dbReference>
<dbReference type="SUPFAM" id="SSF52374">
    <property type="entry name" value="Nucleotidylyl transferase"/>
    <property type="match status" value="1"/>
</dbReference>
<evidence type="ECO:0000255" key="1">
    <source>
        <dbReference type="HAMAP-Rule" id="MF_01697"/>
    </source>
</evidence>
<keyword id="KW-0067">ATP-binding</keyword>
<keyword id="KW-0436">Ligase</keyword>
<keyword id="KW-0479">Metal-binding</keyword>
<keyword id="KW-0547">Nucleotide-binding</keyword>
<keyword id="KW-1185">Reference proteome</keyword>
<keyword id="KW-0862">Zinc</keyword>
<comment type="function">
    <text evidence="1">Catalyzes the ATP-dependent condensation of GlcN-Ins and L-cysteine to form L-Cys-GlcN-Ins.</text>
</comment>
<comment type="catalytic activity">
    <reaction evidence="1">
        <text>1D-myo-inositol 2-amino-2-deoxy-alpha-D-glucopyranoside + L-cysteine + ATP = 1D-myo-inositol 2-(L-cysteinylamino)-2-deoxy-alpha-D-glucopyranoside + AMP + diphosphate + H(+)</text>
        <dbReference type="Rhea" id="RHEA:26176"/>
        <dbReference type="ChEBI" id="CHEBI:15378"/>
        <dbReference type="ChEBI" id="CHEBI:30616"/>
        <dbReference type="ChEBI" id="CHEBI:33019"/>
        <dbReference type="ChEBI" id="CHEBI:35235"/>
        <dbReference type="ChEBI" id="CHEBI:58886"/>
        <dbReference type="ChEBI" id="CHEBI:58887"/>
        <dbReference type="ChEBI" id="CHEBI:456215"/>
        <dbReference type="EC" id="6.3.1.13"/>
    </reaction>
</comment>
<comment type="cofactor">
    <cofactor evidence="1">
        <name>Zn(2+)</name>
        <dbReference type="ChEBI" id="CHEBI:29105"/>
    </cofactor>
    <text evidence="1">Binds 1 zinc ion per subunit.</text>
</comment>
<comment type="subunit">
    <text evidence="1">Monomer.</text>
</comment>
<comment type="similarity">
    <text evidence="1">Belongs to the class-I aminoacyl-tRNA synthetase family. MshC subfamily.</text>
</comment>
<name>MSHC_MYCMM</name>
<gene>
    <name evidence="1" type="primary">mshC</name>
    <name type="ordered locus">MMAR_3110</name>
</gene>
<organism>
    <name type="scientific">Mycobacterium marinum (strain ATCC BAA-535 / M)</name>
    <dbReference type="NCBI Taxonomy" id="216594"/>
    <lineage>
        <taxon>Bacteria</taxon>
        <taxon>Bacillati</taxon>
        <taxon>Actinomycetota</taxon>
        <taxon>Actinomycetes</taxon>
        <taxon>Mycobacteriales</taxon>
        <taxon>Mycobacteriaceae</taxon>
        <taxon>Mycobacterium</taxon>
        <taxon>Mycobacterium ulcerans group</taxon>
    </lineage>
</organism>
<proteinExistence type="inferred from homology"/>